<name>SYE_MYCUA</name>
<evidence type="ECO:0000255" key="1">
    <source>
        <dbReference type="HAMAP-Rule" id="MF_00022"/>
    </source>
</evidence>
<evidence type="ECO:0000305" key="2"/>
<proteinExistence type="inferred from homology"/>
<dbReference type="EC" id="6.1.1.17" evidence="1"/>
<dbReference type="EMBL" id="CP000325">
    <property type="protein sequence ID" value="ABL04407.1"/>
    <property type="status" value="ALT_INIT"/>
    <property type="molecule type" value="Genomic_DNA"/>
</dbReference>
<dbReference type="RefSeq" id="WP_083421508.1">
    <property type="nucleotide sequence ID" value="NC_008611.1"/>
</dbReference>
<dbReference type="SMR" id="A0PPY8"/>
<dbReference type="KEGG" id="mul:MUL_1957"/>
<dbReference type="eggNOG" id="COG0008">
    <property type="taxonomic scope" value="Bacteria"/>
</dbReference>
<dbReference type="HOGENOM" id="CLU_015768_6_1_11"/>
<dbReference type="Proteomes" id="UP000000765">
    <property type="component" value="Chromosome"/>
</dbReference>
<dbReference type="GO" id="GO:0005829">
    <property type="term" value="C:cytosol"/>
    <property type="evidence" value="ECO:0007669"/>
    <property type="project" value="TreeGrafter"/>
</dbReference>
<dbReference type="GO" id="GO:0005524">
    <property type="term" value="F:ATP binding"/>
    <property type="evidence" value="ECO:0007669"/>
    <property type="project" value="UniProtKB-UniRule"/>
</dbReference>
<dbReference type="GO" id="GO:0004818">
    <property type="term" value="F:glutamate-tRNA ligase activity"/>
    <property type="evidence" value="ECO:0007669"/>
    <property type="project" value="UniProtKB-UniRule"/>
</dbReference>
<dbReference type="GO" id="GO:0000049">
    <property type="term" value="F:tRNA binding"/>
    <property type="evidence" value="ECO:0007669"/>
    <property type="project" value="InterPro"/>
</dbReference>
<dbReference type="GO" id="GO:0008270">
    <property type="term" value="F:zinc ion binding"/>
    <property type="evidence" value="ECO:0007669"/>
    <property type="project" value="InterPro"/>
</dbReference>
<dbReference type="GO" id="GO:0006424">
    <property type="term" value="P:glutamyl-tRNA aminoacylation"/>
    <property type="evidence" value="ECO:0007669"/>
    <property type="project" value="UniProtKB-UniRule"/>
</dbReference>
<dbReference type="CDD" id="cd00808">
    <property type="entry name" value="GluRS_core"/>
    <property type="match status" value="1"/>
</dbReference>
<dbReference type="FunFam" id="3.40.50.620:FF:000149">
    <property type="entry name" value="Glutamate--tRNA ligase"/>
    <property type="match status" value="1"/>
</dbReference>
<dbReference type="Gene3D" id="1.10.10.350">
    <property type="match status" value="1"/>
</dbReference>
<dbReference type="Gene3D" id="1.10.8.70">
    <property type="entry name" value="Glutamate-tRNA synthetase, class I, anticodon-binding domain 1"/>
    <property type="match status" value="1"/>
</dbReference>
<dbReference type="Gene3D" id="1.10.1160.10">
    <property type="entry name" value="Glutamyl-trna Synthetase, Domain 2"/>
    <property type="match status" value="1"/>
</dbReference>
<dbReference type="Gene3D" id="3.90.800.10">
    <property type="entry name" value="Glutamyl-tRNA Synthetase, Domain 3"/>
    <property type="match status" value="1"/>
</dbReference>
<dbReference type="Gene3D" id="3.40.50.620">
    <property type="entry name" value="HUPs"/>
    <property type="match status" value="1"/>
</dbReference>
<dbReference type="HAMAP" id="MF_00022">
    <property type="entry name" value="Glu_tRNA_synth_type1"/>
    <property type="match status" value="1"/>
</dbReference>
<dbReference type="InterPro" id="IPR045462">
    <property type="entry name" value="aa-tRNA-synth_I_cd-bd"/>
</dbReference>
<dbReference type="InterPro" id="IPR020751">
    <property type="entry name" value="aa-tRNA-synth_I_codon-bd_sub2"/>
</dbReference>
<dbReference type="InterPro" id="IPR008925">
    <property type="entry name" value="aa_tRNA-synth_I_cd-bd_sf"/>
</dbReference>
<dbReference type="InterPro" id="IPR004527">
    <property type="entry name" value="Glu-tRNA-ligase_bac/mito"/>
</dbReference>
<dbReference type="InterPro" id="IPR020752">
    <property type="entry name" value="Glu-tRNA-synth_I_codon-bd_sub1"/>
</dbReference>
<dbReference type="InterPro" id="IPR000924">
    <property type="entry name" value="Glu/Gln-tRNA-synth"/>
</dbReference>
<dbReference type="InterPro" id="IPR020058">
    <property type="entry name" value="Glu/Gln-tRNA-synth_Ib_cat-dom"/>
</dbReference>
<dbReference type="InterPro" id="IPR020061">
    <property type="entry name" value="Glu_tRNA_lig_a-bdl"/>
</dbReference>
<dbReference type="InterPro" id="IPR049940">
    <property type="entry name" value="GluQ/Sye"/>
</dbReference>
<dbReference type="InterPro" id="IPR033910">
    <property type="entry name" value="GluRS_core"/>
</dbReference>
<dbReference type="InterPro" id="IPR014729">
    <property type="entry name" value="Rossmann-like_a/b/a_fold"/>
</dbReference>
<dbReference type="NCBIfam" id="TIGR00464">
    <property type="entry name" value="gltX_bact"/>
    <property type="match status" value="1"/>
</dbReference>
<dbReference type="PANTHER" id="PTHR43311">
    <property type="entry name" value="GLUTAMATE--TRNA LIGASE"/>
    <property type="match status" value="1"/>
</dbReference>
<dbReference type="PANTHER" id="PTHR43311:SF2">
    <property type="entry name" value="GLUTAMATE--TRNA LIGASE, MITOCHONDRIAL-RELATED"/>
    <property type="match status" value="1"/>
</dbReference>
<dbReference type="Pfam" id="PF19269">
    <property type="entry name" value="Anticodon_2"/>
    <property type="match status" value="1"/>
</dbReference>
<dbReference type="Pfam" id="PF00749">
    <property type="entry name" value="tRNA-synt_1c"/>
    <property type="match status" value="1"/>
</dbReference>
<dbReference type="PRINTS" id="PR00987">
    <property type="entry name" value="TRNASYNTHGLU"/>
</dbReference>
<dbReference type="SUPFAM" id="SSF48163">
    <property type="entry name" value="An anticodon-binding domain of class I aminoacyl-tRNA synthetases"/>
    <property type="match status" value="1"/>
</dbReference>
<dbReference type="SUPFAM" id="SSF52374">
    <property type="entry name" value="Nucleotidylyl transferase"/>
    <property type="match status" value="1"/>
</dbReference>
<reference key="1">
    <citation type="journal article" date="2007" name="Genome Res.">
        <title>Reductive evolution and niche adaptation inferred from the genome of Mycobacterium ulcerans, the causative agent of Buruli ulcer.</title>
        <authorList>
            <person name="Stinear T.P."/>
            <person name="Seemann T."/>
            <person name="Pidot S."/>
            <person name="Frigui W."/>
            <person name="Reysset G."/>
            <person name="Garnier T."/>
            <person name="Meurice G."/>
            <person name="Simon D."/>
            <person name="Bouchier C."/>
            <person name="Ma L."/>
            <person name="Tichit M."/>
            <person name="Porter J.L."/>
            <person name="Ryan J."/>
            <person name="Johnson P.D.R."/>
            <person name="Davies J.K."/>
            <person name="Jenkin G.A."/>
            <person name="Small P.L.C."/>
            <person name="Jones L.M."/>
            <person name="Tekaia F."/>
            <person name="Laval F."/>
            <person name="Daffe M."/>
            <person name="Parkhill J."/>
            <person name="Cole S.T."/>
        </authorList>
    </citation>
    <scope>NUCLEOTIDE SEQUENCE [LARGE SCALE GENOMIC DNA]</scope>
    <source>
        <strain>Agy99</strain>
    </source>
</reference>
<feature type="chain" id="PRO_0000367716" description="Glutamate--tRNA ligase">
    <location>
        <begin position="1"/>
        <end position="489"/>
    </location>
</feature>
<feature type="short sequence motif" description="'HIGH' region" evidence="1">
    <location>
        <begin position="12"/>
        <end position="22"/>
    </location>
</feature>
<feature type="short sequence motif" description="'KMSKS' region" evidence="1">
    <location>
        <begin position="256"/>
        <end position="260"/>
    </location>
</feature>
<feature type="binding site" evidence="1">
    <location>
        <position position="259"/>
    </location>
    <ligand>
        <name>ATP</name>
        <dbReference type="ChEBI" id="CHEBI:30616"/>
    </ligand>
</feature>
<keyword id="KW-0030">Aminoacyl-tRNA synthetase</keyword>
<keyword id="KW-0067">ATP-binding</keyword>
<keyword id="KW-0963">Cytoplasm</keyword>
<keyword id="KW-0436">Ligase</keyword>
<keyword id="KW-0547">Nucleotide-binding</keyword>
<keyword id="KW-0648">Protein biosynthesis</keyword>
<comment type="function">
    <text evidence="1">Catalyzes the attachment of glutamate to tRNA(Glu) in a two-step reaction: glutamate is first activated by ATP to form Glu-AMP and then transferred to the acceptor end of tRNA(Glu).</text>
</comment>
<comment type="catalytic activity">
    <reaction evidence="1">
        <text>tRNA(Glu) + L-glutamate + ATP = L-glutamyl-tRNA(Glu) + AMP + diphosphate</text>
        <dbReference type="Rhea" id="RHEA:23540"/>
        <dbReference type="Rhea" id="RHEA-COMP:9663"/>
        <dbReference type="Rhea" id="RHEA-COMP:9680"/>
        <dbReference type="ChEBI" id="CHEBI:29985"/>
        <dbReference type="ChEBI" id="CHEBI:30616"/>
        <dbReference type="ChEBI" id="CHEBI:33019"/>
        <dbReference type="ChEBI" id="CHEBI:78442"/>
        <dbReference type="ChEBI" id="CHEBI:78520"/>
        <dbReference type="ChEBI" id="CHEBI:456215"/>
        <dbReference type="EC" id="6.1.1.17"/>
    </reaction>
</comment>
<comment type="subunit">
    <text evidence="1">Monomer.</text>
</comment>
<comment type="subcellular location">
    <subcellularLocation>
        <location evidence="1">Cytoplasm</location>
    </subcellularLocation>
</comment>
<comment type="similarity">
    <text evidence="1">Belongs to the class-I aminoacyl-tRNA synthetase family. Glutamate--tRNA ligase type 1 subfamily.</text>
</comment>
<comment type="sequence caution" evidence="2">
    <conflict type="erroneous initiation">
        <sequence resource="EMBL-CDS" id="ABL04407"/>
    </conflict>
</comment>
<gene>
    <name evidence="1" type="primary">gltX</name>
    <name type="ordered locus">MUL_1957</name>
</gene>
<accession>A0PPY8</accession>
<protein>
    <recommendedName>
        <fullName evidence="1">Glutamate--tRNA ligase</fullName>
        <ecNumber evidence="1">6.1.1.17</ecNumber>
    </recommendedName>
    <alternativeName>
        <fullName evidence="1">Glutamyl-tRNA synthetase</fullName>
        <shortName evidence="1">GluRS</shortName>
    </alternativeName>
</protein>
<sequence length="489" mass="53662">MTSSSVRVRFCPSPTGIPHVGMVRTALFNWAYARHTGGTFVFRIEDTDAARDSEESYLALLDALRWLGLDWDEGPEVDGPYGPYRQSQRTEIYHDVVAKLLTAGEAYYAFSTPEEVEARHIAAGRNPKLGYDNFDRQLTDSQRAAYLAEGRKPVVRLRMPDTDLAWHDLVRGPTTFAAGSVPDFALTRATGDPLYTLVNPCDDALMKITHVLRGEDLLPSTPRQIALYQALMCIGIAERVPEFAHLPTVLGEETKKLSKRDPQSNLFAHRDRGFIPEGLLNYLALLGWAIADDHDLFSLDEMVAAFDVADVNSNPARFDQKKADAINAEHIRMLDVADFTARLRAYLDTHGHQLALDDAAFAVAAELVQTRIVVLEDAWALLKFLNDDRYAIDPKAAAKELGPDAGPVLDAAIAALDGAADWTTADIEAALKTALIGGMALKPRKAFGPIRVAATGTTVSPPLFESLELLGRERSLGRLRSARDQVGSP</sequence>
<organism>
    <name type="scientific">Mycobacterium ulcerans (strain Agy99)</name>
    <dbReference type="NCBI Taxonomy" id="362242"/>
    <lineage>
        <taxon>Bacteria</taxon>
        <taxon>Bacillati</taxon>
        <taxon>Actinomycetota</taxon>
        <taxon>Actinomycetes</taxon>
        <taxon>Mycobacteriales</taxon>
        <taxon>Mycobacteriaceae</taxon>
        <taxon>Mycobacterium</taxon>
        <taxon>Mycobacterium ulcerans group</taxon>
    </lineage>
</organism>